<dbReference type="EC" id="6.3.2.6" evidence="1"/>
<dbReference type="EMBL" id="BX640426">
    <property type="protein sequence ID" value="CAE36495.1"/>
    <property type="molecule type" value="Genomic_DNA"/>
</dbReference>
<dbReference type="RefSeq" id="WP_003809513.1">
    <property type="nucleotide sequence ID" value="NC_002928.3"/>
</dbReference>
<dbReference type="SMR" id="Q7WB15"/>
<dbReference type="KEGG" id="bpa:BPP1194"/>
<dbReference type="HOGENOM" id="CLU_045637_0_0_4"/>
<dbReference type="UniPathway" id="UPA00074">
    <property type="reaction ID" value="UER00131"/>
</dbReference>
<dbReference type="Proteomes" id="UP000001421">
    <property type="component" value="Chromosome"/>
</dbReference>
<dbReference type="GO" id="GO:0005737">
    <property type="term" value="C:cytoplasm"/>
    <property type="evidence" value="ECO:0007669"/>
    <property type="project" value="TreeGrafter"/>
</dbReference>
<dbReference type="GO" id="GO:0005524">
    <property type="term" value="F:ATP binding"/>
    <property type="evidence" value="ECO:0007669"/>
    <property type="project" value="UniProtKB-KW"/>
</dbReference>
<dbReference type="GO" id="GO:0004639">
    <property type="term" value="F:phosphoribosylaminoimidazolesuccinocarboxamide synthase activity"/>
    <property type="evidence" value="ECO:0007669"/>
    <property type="project" value="UniProtKB-UniRule"/>
</dbReference>
<dbReference type="GO" id="GO:0006189">
    <property type="term" value="P:'de novo' IMP biosynthetic process"/>
    <property type="evidence" value="ECO:0007669"/>
    <property type="project" value="UniProtKB-UniRule"/>
</dbReference>
<dbReference type="CDD" id="cd01414">
    <property type="entry name" value="SAICAR_synt_Sc"/>
    <property type="match status" value="1"/>
</dbReference>
<dbReference type="FunFam" id="3.30.470.20:FF:000015">
    <property type="entry name" value="Phosphoribosylaminoimidazole-succinocarboxamide synthase"/>
    <property type="match status" value="1"/>
</dbReference>
<dbReference type="Gene3D" id="3.30.470.20">
    <property type="entry name" value="ATP-grasp fold, B domain"/>
    <property type="match status" value="1"/>
</dbReference>
<dbReference type="Gene3D" id="3.30.200.20">
    <property type="entry name" value="Phosphorylase Kinase, domain 1"/>
    <property type="match status" value="1"/>
</dbReference>
<dbReference type="HAMAP" id="MF_00137">
    <property type="entry name" value="SAICAR_synth"/>
    <property type="match status" value="1"/>
</dbReference>
<dbReference type="InterPro" id="IPR028923">
    <property type="entry name" value="SAICAR_synt/ADE2_N"/>
</dbReference>
<dbReference type="InterPro" id="IPR001636">
    <property type="entry name" value="SAICAR_synth"/>
</dbReference>
<dbReference type="InterPro" id="IPR018236">
    <property type="entry name" value="SAICAR_synthetase_CS"/>
</dbReference>
<dbReference type="NCBIfam" id="NF010568">
    <property type="entry name" value="PRK13961.1"/>
    <property type="match status" value="1"/>
</dbReference>
<dbReference type="NCBIfam" id="TIGR00081">
    <property type="entry name" value="purC"/>
    <property type="match status" value="1"/>
</dbReference>
<dbReference type="PANTHER" id="PTHR43700">
    <property type="entry name" value="PHOSPHORIBOSYLAMINOIMIDAZOLE-SUCCINOCARBOXAMIDE SYNTHASE"/>
    <property type="match status" value="1"/>
</dbReference>
<dbReference type="PANTHER" id="PTHR43700:SF1">
    <property type="entry name" value="PHOSPHORIBOSYLAMINOIMIDAZOLE-SUCCINOCARBOXAMIDE SYNTHASE"/>
    <property type="match status" value="1"/>
</dbReference>
<dbReference type="Pfam" id="PF01259">
    <property type="entry name" value="SAICAR_synt"/>
    <property type="match status" value="1"/>
</dbReference>
<dbReference type="SUPFAM" id="SSF56104">
    <property type="entry name" value="SAICAR synthase-like"/>
    <property type="match status" value="1"/>
</dbReference>
<dbReference type="PROSITE" id="PS01057">
    <property type="entry name" value="SAICAR_SYNTHETASE_1"/>
    <property type="match status" value="1"/>
</dbReference>
<dbReference type="PROSITE" id="PS01058">
    <property type="entry name" value="SAICAR_SYNTHETASE_2"/>
    <property type="match status" value="1"/>
</dbReference>
<keyword id="KW-0067">ATP-binding</keyword>
<keyword id="KW-0436">Ligase</keyword>
<keyword id="KW-0547">Nucleotide-binding</keyword>
<keyword id="KW-0658">Purine biosynthesis</keyword>
<protein>
    <recommendedName>
        <fullName evidence="1">Phosphoribosylaminoimidazole-succinocarboxamide synthase</fullName>
        <ecNumber evidence="1">6.3.2.6</ecNumber>
    </recommendedName>
    <alternativeName>
        <fullName evidence="1">SAICAR synthetase</fullName>
    </alternativeName>
</protein>
<feature type="chain" id="PRO_0000100805" description="Phosphoribosylaminoimidazole-succinocarboxamide synthase">
    <location>
        <begin position="1"/>
        <end position="293"/>
    </location>
</feature>
<evidence type="ECO:0000255" key="1">
    <source>
        <dbReference type="HAMAP-Rule" id="MF_00137"/>
    </source>
</evidence>
<reference key="1">
    <citation type="journal article" date="2003" name="Nat. Genet.">
        <title>Comparative analysis of the genome sequences of Bordetella pertussis, Bordetella parapertussis and Bordetella bronchiseptica.</title>
        <authorList>
            <person name="Parkhill J."/>
            <person name="Sebaihia M."/>
            <person name="Preston A."/>
            <person name="Murphy L.D."/>
            <person name="Thomson N.R."/>
            <person name="Harris D.E."/>
            <person name="Holden M.T.G."/>
            <person name="Churcher C.M."/>
            <person name="Bentley S.D."/>
            <person name="Mungall K.L."/>
            <person name="Cerdeno-Tarraga A.-M."/>
            <person name="Temple L."/>
            <person name="James K.D."/>
            <person name="Harris B."/>
            <person name="Quail M.A."/>
            <person name="Achtman M."/>
            <person name="Atkin R."/>
            <person name="Baker S."/>
            <person name="Basham D."/>
            <person name="Bason N."/>
            <person name="Cherevach I."/>
            <person name="Chillingworth T."/>
            <person name="Collins M."/>
            <person name="Cronin A."/>
            <person name="Davis P."/>
            <person name="Doggett J."/>
            <person name="Feltwell T."/>
            <person name="Goble A."/>
            <person name="Hamlin N."/>
            <person name="Hauser H."/>
            <person name="Holroyd S."/>
            <person name="Jagels K."/>
            <person name="Leather S."/>
            <person name="Moule S."/>
            <person name="Norberczak H."/>
            <person name="O'Neil S."/>
            <person name="Ormond D."/>
            <person name="Price C."/>
            <person name="Rabbinowitsch E."/>
            <person name="Rutter S."/>
            <person name="Sanders M."/>
            <person name="Saunders D."/>
            <person name="Seeger K."/>
            <person name="Sharp S."/>
            <person name="Simmonds M."/>
            <person name="Skelton J."/>
            <person name="Squares R."/>
            <person name="Squares S."/>
            <person name="Stevens K."/>
            <person name="Unwin L."/>
            <person name="Whitehead S."/>
            <person name="Barrell B.G."/>
            <person name="Maskell D.J."/>
        </authorList>
    </citation>
    <scope>NUCLEOTIDE SEQUENCE [LARGE SCALE GENOMIC DNA]</scope>
    <source>
        <strain>12822 / ATCC BAA-587 / NCTC 13253</strain>
    </source>
</reference>
<accession>Q7WB15</accession>
<comment type="catalytic activity">
    <reaction evidence="1">
        <text>5-amino-1-(5-phospho-D-ribosyl)imidazole-4-carboxylate + L-aspartate + ATP = (2S)-2-[5-amino-1-(5-phospho-beta-D-ribosyl)imidazole-4-carboxamido]succinate + ADP + phosphate + 2 H(+)</text>
        <dbReference type="Rhea" id="RHEA:22628"/>
        <dbReference type="ChEBI" id="CHEBI:15378"/>
        <dbReference type="ChEBI" id="CHEBI:29991"/>
        <dbReference type="ChEBI" id="CHEBI:30616"/>
        <dbReference type="ChEBI" id="CHEBI:43474"/>
        <dbReference type="ChEBI" id="CHEBI:58443"/>
        <dbReference type="ChEBI" id="CHEBI:77657"/>
        <dbReference type="ChEBI" id="CHEBI:456216"/>
        <dbReference type="EC" id="6.3.2.6"/>
    </reaction>
</comment>
<comment type="pathway">
    <text evidence="1">Purine metabolism; IMP biosynthesis via de novo pathway; 5-amino-1-(5-phospho-D-ribosyl)imidazole-4-carboxamide from 5-amino-1-(5-phospho-D-ribosyl)imidazole-4-carboxylate: step 1/2.</text>
</comment>
<comment type="similarity">
    <text evidence="1">Belongs to the SAICAR synthetase family.</text>
</comment>
<gene>
    <name evidence="1" type="primary">purC</name>
    <name type="ordered locus">BPP1194</name>
</gene>
<sequence>MTSALHESSIKSLPLLGRGKVRDMYAVGDDKLLIVASDRISAFDVILDDPIPGKGQVLTELTDFWLRKLAHILPNHSTGIQPEDVVAPDEVDQVRGRAVVVKRLKPILVEAVARGYLIGSGWKDYQASGSVCGIALPAGLQQASQLPEPIFTPAAKAEFGMHDENVDFAHVVKEVGQEMAERIRDVTLRLYGEAARFAATKGIIIADTKFEFGLDDNGTLHLMDEVLTPDSSRFWPADGYRVGISPPSFDKQFVRDWLETQPWDKTPPAPRLPRDVLEKTAAKYREALDRLLA</sequence>
<name>PUR7_BORPA</name>
<proteinExistence type="inferred from homology"/>
<organism>
    <name type="scientific">Bordetella parapertussis (strain 12822 / ATCC BAA-587 / NCTC 13253)</name>
    <dbReference type="NCBI Taxonomy" id="257311"/>
    <lineage>
        <taxon>Bacteria</taxon>
        <taxon>Pseudomonadati</taxon>
        <taxon>Pseudomonadota</taxon>
        <taxon>Betaproteobacteria</taxon>
        <taxon>Burkholderiales</taxon>
        <taxon>Alcaligenaceae</taxon>
        <taxon>Bordetella</taxon>
    </lineage>
</organism>